<name>CRBB1_MOUSE</name>
<protein>
    <recommendedName>
        <fullName>Beta-crystallin B1</fullName>
    </recommendedName>
    <alternativeName>
        <fullName>Beta-B1 crystallin</fullName>
    </alternativeName>
    <component>
        <recommendedName>
            <fullName>Beta-crystallin B1B</fullName>
        </recommendedName>
    </component>
</protein>
<keyword id="KW-0002">3D-structure</keyword>
<keyword id="KW-0007">Acetylation</keyword>
<keyword id="KW-0273">Eye lens protein</keyword>
<keyword id="KW-0488">Methylation</keyword>
<keyword id="KW-1185">Reference proteome</keyword>
<keyword id="KW-0677">Repeat</keyword>
<accession>Q9WVJ5</accession>
<comment type="function">
    <text>Crystallins are the dominant structural components of the vertebrate eye lens.</text>
</comment>
<comment type="subunit">
    <text>Homo/heterodimer, or complexes of higher-order. The structure of beta-crystallin oligomers seems to be stabilized through interactions between the N-terminal arms.</text>
</comment>
<comment type="interaction">
    <interactant intactId="EBI-8520354">
        <id>Q9WVJ5</id>
    </interactant>
    <interactant intactId="EBI-916888">
        <id>P23928</id>
        <label>Cryab</label>
    </interactant>
    <organismsDiffer>true</organismsDiffer>
    <experiments>2</experiments>
</comment>
<comment type="domain">
    <text>Has a two-domain beta-structure, folded into four very similar Greek key motifs.</text>
</comment>
<comment type="PTM">
    <text>Specific cleavages in the N-terminal arm occur during lens maturation and give rise to truncated forms, leading to impaired oligomerization and protein insolubilization. The protease responsible for this partial degradation could be calpain II.</text>
</comment>
<comment type="similarity">
    <text evidence="4">Belongs to the beta/gamma-crystallin family.</text>
</comment>
<feature type="initiator methionine" description="Removed" evidence="1">
    <location>
        <position position="1"/>
    </location>
</feature>
<feature type="chain" id="PRO_0000006337" description="Beta-crystallin B1">
    <location>
        <begin position="2"/>
        <end position="250"/>
    </location>
</feature>
<feature type="chain" id="PRO_0000006338" description="Beta-crystallin B1B">
    <location>
        <begin position="12"/>
        <end position="250"/>
    </location>
</feature>
<feature type="domain" description="Beta/gamma crystallin 'Greek key' 1" evidence="2">
    <location>
        <begin position="57"/>
        <end position="96"/>
    </location>
</feature>
<feature type="domain" description="Beta/gamma crystallin 'Greek key' 2" evidence="2">
    <location>
        <begin position="97"/>
        <end position="141"/>
    </location>
</feature>
<feature type="domain" description="Beta/gamma crystallin 'Greek key' 3" evidence="2">
    <location>
        <begin position="147"/>
        <end position="188"/>
    </location>
</feature>
<feature type="domain" description="Beta/gamma crystallin 'Greek key' 4" evidence="2">
    <location>
        <begin position="189"/>
        <end position="231"/>
    </location>
</feature>
<feature type="region of interest" description="Disordered" evidence="3">
    <location>
        <begin position="1"/>
        <end position="49"/>
    </location>
</feature>
<feature type="region of interest" description="N-terminal arm">
    <location>
        <begin position="2"/>
        <end position="56"/>
    </location>
</feature>
<feature type="region of interest" description="Connecting peptide">
    <location>
        <begin position="142"/>
        <end position="146"/>
    </location>
</feature>
<feature type="region of interest" description="C-terminal arm">
    <location>
        <begin position="233"/>
        <end position="250"/>
    </location>
</feature>
<feature type="compositionally biased region" description="Polar residues" evidence="3">
    <location>
        <begin position="1"/>
        <end position="13"/>
    </location>
</feature>
<feature type="compositionally biased region" description="Pro residues" evidence="3">
    <location>
        <begin position="28"/>
        <end position="42"/>
    </location>
</feature>
<feature type="modified residue" description="N-acetylserine" evidence="1">
    <location>
        <position position="2"/>
    </location>
</feature>
<feature type="strand" evidence="5">
    <location>
        <begin position="58"/>
        <end position="64"/>
    </location>
</feature>
<feature type="helix" evidence="5">
    <location>
        <begin position="65"/>
        <end position="67"/>
    </location>
</feature>
<feature type="strand" evidence="5">
    <location>
        <begin position="71"/>
        <end position="76"/>
    </location>
</feature>
<feature type="helix" evidence="5">
    <location>
        <begin position="81"/>
        <end position="84"/>
    </location>
</feature>
<feature type="strand" evidence="5">
    <location>
        <begin position="91"/>
        <end position="97"/>
    </location>
</feature>
<feature type="strand" evidence="5">
    <location>
        <begin position="99"/>
        <end position="104"/>
    </location>
</feature>
<feature type="turn" evidence="5">
    <location>
        <begin position="105"/>
        <end position="107"/>
    </location>
</feature>
<feature type="strand" evidence="5">
    <location>
        <begin position="108"/>
        <end position="114"/>
    </location>
</feature>
<feature type="strand" evidence="5">
    <location>
        <begin position="116"/>
        <end position="119"/>
    </location>
</feature>
<feature type="helix" evidence="5">
    <location>
        <begin position="122"/>
        <end position="124"/>
    </location>
</feature>
<feature type="strand" evidence="5">
    <location>
        <begin position="136"/>
        <end position="139"/>
    </location>
</feature>
<sequence>MSQAAKASATTAVNPGPDGKGKGAPSTGPAPAPGPTPVPASVPRPAAKVGDLPPGSYRLIVFEQENFQGRRVEFSGECLNLGDRGFDRVRSLIVVSGPWVAFEQSAFRGEMFVLEKGEYPRWDTWTSSYRSDRLMSFRPIRMDSQEHKICLFEGANFKGNTMEIQEDDVPSLWVYGFCDRVGSITVSGGTWVGYQYPGYRGYQYLLEPGDFRHWNEWGAFQPQMQAVRRLRDRQWHQEGCFPVLTAEPPK</sequence>
<dbReference type="EMBL" id="AF106853">
    <property type="protein sequence ID" value="AAD42048.1"/>
    <property type="molecule type" value="mRNA"/>
</dbReference>
<dbReference type="EMBL" id="AK014012">
    <property type="protein sequence ID" value="BAB29113.1"/>
    <property type="molecule type" value="mRNA"/>
</dbReference>
<dbReference type="EMBL" id="AK053869">
    <property type="protein sequence ID" value="BAC35565.1"/>
    <property type="molecule type" value="mRNA"/>
</dbReference>
<dbReference type="CCDS" id="CCDS19537.1"/>
<dbReference type="RefSeq" id="NP_001299822.1">
    <property type="nucleotide sequence ID" value="NM_001312893.1"/>
</dbReference>
<dbReference type="RefSeq" id="NP_001299823.1">
    <property type="nucleotide sequence ID" value="NM_001312894.1"/>
</dbReference>
<dbReference type="RefSeq" id="NP_001299824.1">
    <property type="nucleotide sequence ID" value="NM_001312895.1"/>
</dbReference>
<dbReference type="RefSeq" id="NP_076184.1">
    <property type="nucleotide sequence ID" value="NM_023695.3"/>
</dbReference>
<dbReference type="RefSeq" id="XP_006534818.1">
    <property type="nucleotide sequence ID" value="XM_006534755.3"/>
</dbReference>
<dbReference type="RefSeq" id="XP_006534819.1">
    <property type="nucleotide sequence ID" value="XM_006534756.2"/>
</dbReference>
<dbReference type="RefSeq" id="XP_006534820.1">
    <property type="nucleotide sequence ID" value="XM_006534757.2"/>
</dbReference>
<dbReference type="PDB" id="8H0R">
    <property type="method" value="X-ray"/>
    <property type="resolution" value="1.20 A"/>
    <property type="chains" value="A/B=53-143"/>
</dbReference>
<dbReference type="PDBsum" id="8H0R"/>
<dbReference type="SMR" id="Q9WVJ5"/>
<dbReference type="BioGRID" id="198913">
    <property type="interactions" value="2"/>
</dbReference>
<dbReference type="FunCoup" id="Q9WVJ5">
    <property type="interactions" value="43"/>
</dbReference>
<dbReference type="IntAct" id="Q9WVJ5">
    <property type="interactions" value="1"/>
</dbReference>
<dbReference type="MINT" id="Q9WVJ5"/>
<dbReference type="STRING" id="10090.ENSMUSP00000031286"/>
<dbReference type="GlyGen" id="Q9WVJ5">
    <property type="glycosylation" value="1 site"/>
</dbReference>
<dbReference type="PhosphoSitePlus" id="Q9WVJ5"/>
<dbReference type="PaxDb" id="10090-ENSMUSP00000031286"/>
<dbReference type="ProteomicsDB" id="283821"/>
<dbReference type="Antibodypedia" id="24283">
    <property type="antibodies" value="170 antibodies from 27 providers"/>
</dbReference>
<dbReference type="DNASU" id="12960"/>
<dbReference type="Ensembl" id="ENSMUST00000031286.13">
    <property type="protein sequence ID" value="ENSMUSP00000031286.7"/>
    <property type="gene ID" value="ENSMUSG00000029343.18"/>
</dbReference>
<dbReference type="Ensembl" id="ENSMUST00000112375.2">
    <property type="protein sequence ID" value="ENSMUSP00000107994.2"/>
    <property type="gene ID" value="ENSMUSG00000029343.18"/>
</dbReference>
<dbReference type="GeneID" id="12960"/>
<dbReference type="KEGG" id="mmu:12960"/>
<dbReference type="UCSC" id="uc008ysv.1">
    <property type="organism name" value="mouse"/>
</dbReference>
<dbReference type="AGR" id="MGI:104992"/>
<dbReference type="CTD" id="1414"/>
<dbReference type="MGI" id="MGI:104992">
    <property type="gene designation" value="Crybb1"/>
</dbReference>
<dbReference type="VEuPathDB" id="HostDB:ENSMUSG00000029343"/>
<dbReference type="eggNOG" id="ENOG502QTJT">
    <property type="taxonomic scope" value="Eukaryota"/>
</dbReference>
<dbReference type="GeneTree" id="ENSGT00940000160516"/>
<dbReference type="InParanoid" id="Q9WVJ5"/>
<dbReference type="OMA" id="RQWHHEG"/>
<dbReference type="OrthoDB" id="5411518at2759"/>
<dbReference type="PhylomeDB" id="Q9WVJ5"/>
<dbReference type="TreeFam" id="TF331401"/>
<dbReference type="BioGRID-ORCS" id="12960">
    <property type="hits" value="3 hits in 77 CRISPR screens"/>
</dbReference>
<dbReference type="ChiTaRS" id="Crybb1">
    <property type="organism name" value="mouse"/>
</dbReference>
<dbReference type="PRO" id="PR:Q9WVJ5"/>
<dbReference type="Proteomes" id="UP000000589">
    <property type="component" value="Chromosome 5"/>
</dbReference>
<dbReference type="RNAct" id="Q9WVJ5">
    <property type="molecule type" value="protein"/>
</dbReference>
<dbReference type="Bgee" id="ENSMUSG00000029343">
    <property type="expression patterns" value="Expressed in lens of camera-type eye and 97 other cell types or tissues"/>
</dbReference>
<dbReference type="ExpressionAtlas" id="Q9WVJ5">
    <property type="expression patterns" value="baseline and differential"/>
</dbReference>
<dbReference type="GO" id="GO:0005212">
    <property type="term" value="F:structural constituent of eye lens"/>
    <property type="evidence" value="ECO:0007669"/>
    <property type="project" value="UniProtKB-KW"/>
</dbReference>
<dbReference type="GO" id="GO:0001654">
    <property type="term" value="P:eye development"/>
    <property type="evidence" value="ECO:0007669"/>
    <property type="project" value="UniProtKB-ARBA"/>
</dbReference>
<dbReference type="FunFam" id="2.60.20.10:FF:000005">
    <property type="entry name" value="Crystallin, beta B1"/>
    <property type="match status" value="1"/>
</dbReference>
<dbReference type="FunFam" id="2.60.20.10:FF:000002">
    <property type="entry name" value="Crystallin, beta B2"/>
    <property type="match status" value="1"/>
</dbReference>
<dbReference type="Gene3D" id="2.60.20.10">
    <property type="entry name" value="Crystallins"/>
    <property type="match status" value="2"/>
</dbReference>
<dbReference type="InterPro" id="IPR050252">
    <property type="entry name" value="Beta/Gamma-Crystallin"/>
</dbReference>
<dbReference type="InterPro" id="IPR001064">
    <property type="entry name" value="Beta/gamma_crystallin"/>
</dbReference>
<dbReference type="InterPro" id="IPR011024">
    <property type="entry name" value="G_crystallin-like"/>
</dbReference>
<dbReference type="PANTHER" id="PTHR11818:SF12">
    <property type="entry name" value="BETA-CRYSTALLIN B1"/>
    <property type="match status" value="1"/>
</dbReference>
<dbReference type="PANTHER" id="PTHR11818">
    <property type="entry name" value="BETA/GAMMA CRYSTALLIN"/>
    <property type="match status" value="1"/>
</dbReference>
<dbReference type="Pfam" id="PF00030">
    <property type="entry name" value="Crystall"/>
    <property type="match status" value="2"/>
</dbReference>
<dbReference type="PRINTS" id="PR01367">
    <property type="entry name" value="BGCRYSTALLIN"/>
</dbReference>
<dbReference type="SMART" id="SM00247">
    <property type="entry name" value="XTALbg"/>
    <property type="match status" value="2"/>
</dbReference>
<dbReference type="SUPFAM" id="SSF49695">
    <property type="entry name" value="gamma-Crystallin-like"/>
    <property type="match status" value="1"/>
</dbReference>
<dbReference type="PROSITE" id="PS50915">
    <property type="entry name" value="CRYSTALLIN_BETA_GAMMA"/>
    <property type="match status" value="4"/>
</dbReference>
<gene>
    <name type="primary">Crybb1</name>
</gene>
<evidence type="ECO:0000250" key="1">
    <source>
        <dbReference type="UniProtKB" id="P53674"/>
    </source>
</evidence>
<evidence type="ECO:0000255" key="2">
    <source>
        <dbReference type="PROSITE-ProRule" id="PRU00028"/>
    </source>
</evidence>
<evidence type="ECO:0000256" key="3">
    <source>
        <dbReference type="SAM" id="MobiDB-lite"/>
    </source>
</evidence>
<evidence type="ECO:0000305" key="4"/>
<evidence type="ECO:0007829" key="5">
    <source>
        <dbReference type="PDB" id="8H0R"/>
    </source>
</evidence>
<reference key="1">
    <citation type="submission" date="1998-11" db="EMBL/GenBank/DDBJ databases">
        <title>Beta-B1 crystallin: evidence for changes in gene regulation during evolution.</title>
        <authorList>
            <person name="Duncan M.K."/>
            <person name="Hejtmancik J.F."/>
            <person name="Piatigorsky J."/>
        </authorList>
    </citation>
    <scope>NUCLEOTIDE SEQUENCE [MRNA]</scope>
</reference>
<reference key="2">
    <citation type="journal article" date="2005" name="Science">
        <title>The transcriptional landscape of the mammalian genome.</title>
        <authorList>
            <person name="Carninci P."/>
            <person name="Kasukawa T."/>
            <person name="Katayama S."/>
            <person name="Gough J."/>
            <person name="Frith M.C."/>
            <person name="Maeda N."/>
            <person name="Oyama R."/>
            <person name="Ravasi T."/>
            <person name="Lenhard B."/>
            <person name="Wells C."/>
            <person name="Kodzius R."/>
            <person name="Shimokawa K."/>
            <person name="Bajic V.B."/>
            <person name="Brenner S.E."/>
            <person name="Batalov S."/>
            <person name="Forrest A.R."/>
            <person name="Zavolan M."/>
            <person name="Davis M.J."/>
            <person name="Wilming L.G."/>
            <person name="Aidinis V."/>
            <person name="Allen J.E."/>
            <person name="Ambesi-Impiombato A."/>
            <person name="Apweiler R."/>
            <person name="Aturaliya R.N."/>
            <person name="Bailey T.L."/>
            <person name="Bansal M."/>
            <person name="Baxter L."/>
            <person name="Beisel K.W."/>
            <person name="Bersano T."/>
            <person name="Bono H."/>
            <person name="Chalk A.M."/>
            <person name="Chiu K.P."/>
            <person name="Choudhary V."/>
            <person name="Christoffels A."/>
            <person name="Clutterbuck D.R."/>
            <person name="Crowe M.L."/>
            <person name="Dalla E."/>
            <person name="Dalrymple B.P."/>
            <person name="de Bono B."/>
            <person name="Della Gatta G."/>
            <person name="di Bernardo D."/>
            <person name="Down T."/>
            <person name="Engstrom P."/>
            <person name="Fagiolini M."/>
            <person name="Faulkner G."/>
            <person name="Fletcher C.F."/>
            <person name="Fukushima T."/>
            <person name="Furuno M."/>
            <person name="Futaki S."/>
            <person name="Gariboldi M."/>
            <person name="Georgii-Hemming P."/>
            <person name="Gingeras T.R."/>
            <person name="Gojobori T."/>
            <person name="Green R.E."/>
            <person name="Gustincich S."/>
            <person name="Harbers M."/>
            <person name="Hayashi Y."/>
            <person name="Hensch T.K."/>
            <person name="Hirokawa N."/>
            <person name="Hill D."/>
            <person name="Huminiecki L."/>
            <person name="Iacono M."/>
            <person name="Ikeo K."/>
            <person name="Iwama A."/>
            <person name="Ishikawa T."/>
            <person name="Jakt M."/>
            <person name="Kanapin A."/>
            <person name="Katoh M."/>
            <person name="Kawasawa Y."/>
            <person name="Kelso J."/>
            <person name="Kitamura H."/>
            <person name="Kitano H."/>
            <person name="Kollias G."/>
            <person name="Krishnan S.P."/>
            <person name="Kruger A."/>
            <person name="Kummerfeld S.K."/>
            <person name="Kurochkin I.V."/>
            <person name="Lareau L.F."/>
            <person name="Lazarevic D."/>
            <person name="Lipovich L."/>
            <person name="Liu J."/>
            <person name="Liuni S."/>
            <person name="McWilliam S."/>
            <person name="Madan Babu M."/>
            <person name="Madera M."/>
            <person name="Marchionni L."/>
            <person name="Matsuda H."/>
            <person name="Matsuzawa S."/>
            <person name="Miki H."/>
            <person name="Mignone F."/>
            <person name="Miyake S."/>
            <person name="Morris K."/>
            <person name="Mottagui-Tabar S."/>
            <person name="Mulder N."/>
            <person name="Nakano N."/>
            <person name="Nakauchi H."/>
            <person name="Ng P."/>
            <person name="Nilsson R."/>
            <person name="Nishiguchi S."/>
            <person name="Nishikawa S."/>
            <person name="Nori F."/>
            <person name="Ohara O."/>
            <person name="Okazaki Y."/>
            <person name="Orlando V."/>
            <person name="Pang K.C."/>
            <person name="Pavan W.J."/>
            <person name="Pavesi G."/>
            <person name="Pesole G."/>
            <person name="Petrovsky N."/>
            <person name="Piazza S."/>
            <person name="Reed J."/>
            <person name="Reid J.F."/>
            <person name="Ring B.Z."/>
            <person name="Ringwald M."/>
            <person name="Rost B."/>
            <person name="Ruan Y."/>
            <person name="Salzberg S.L."/>
            <person name="Sandelin A."/>
            <person name="Schneider C."/>
            <person name="Schoenbach C."/>
            <person name="Sekiguchi K."/>
            <person name="Semple C.A."/>
            <person name="Seno S."/>
            <person name="Sessa L."/>
            <person name="Sheng Y."/>
            <person name="Shibata Y."/>
            <person name="Shimada H."/>
            <person name="Shimada K."/>
            <person name="Silva D."/>
            <person name="Sinclair B."/>
            <person name="Sperling S."/>
            <person name="Stupka E."/>
            <person name="Sugiura K."/>
            <person name="Sultana R."/>
            <person name="Takenaka Y."/>
            <person name="Taki K."/>
            <person name="Tammoja K."/>
            <person name="Tan S.L."/>
            <person name="Tang S."/>
            <person name="Taylor M.S."/>
            <person name="Tegner J."/>
            <person name="Teichmann S.A."/>
            <person name="Ueda H.R."/>
            <person name="van Nimwegen E."/>
            <person name="Verardo R."/>
            <person name="Wei C.L."/>
            <person name="Yagi K."/>
            <person name="Yamanishi H."/>
            <person name="Zabarovsky E."/>
            <person name="Zhu S."/>
            <person name="Zimmer A."/>
            <person name="Hide W."/>
            <person name="Bult C."/>
            <person name="Grimmond S.M."/>
            <person name="Teasdale R.D."/>
            <person name="Liu E.T."/>
            <person name="Brusic V."/>
            <person name="Quackenbush J."/>
            <person name="Wahlestedt C."/>
            <person name="Mattick J.S."/>
            <person name="Hume D.A."/>
            <person name="Kai C."/>
            <person name="Sasaki D."/>
            <person name="Tomaru Y."/>
            <person name="Fukuda S."/>
            <person name="Kanamori-Katayama M."/>
            <person name="Suzuki M."/>
            <person name="Aoki J."/>
            <person name="Arakawa T."/>
            <person name="Iida J."/>
            <person name="Imamura K."/>
            <person name="Itoh M."/>
            <person name="Kato T."/>
            <person name="Kawaji H."/>
            <person name="Kawagashira N."/>
            <person name="Kawashima T."/>
            <person name="Kojima M."/>
            <person name="Kondo S."/>
            <person name="Konno H."/>
            <person name="Nakano K."/>
            <person name="Ninomiya N."/>
            <person name="Nishio T."/>
            <person name="Okada M."/>
            <person name="Plessy C."/>
            <person name="Shibata K."/>
            <person name="Shiraki T."/>
            <person name="Suzuki S."/>
            <person name="Tagami M."/>
            <person name="Waki K."/>
            <person name="Watahiki A."/>
            <person name="Okamura-Oho Y."/>
            <person name="Suzuki H."/>
            <person name="Kawai J."/>
            <person name="Hayashizaki Y."/>
        </authorList>
    </citation>
    <scope>NUCLEOTIDE SEQUENCE [LARGE SCALE MRNA]</scope>
    <source>
        <strain>C57BL/6J</strain>
        <tissue>Eye</tissue>
        <tissue>Head</tissue>
    </source>
</reference>
<reference key="3">
    <citation type="journal article" date="2010" name="Cell">
        <title>A tissue-specific atlas of mouse protein phosphorylation and expression.</title>
        <authorList>
            <person name="Huttlin E.L."/>
            <person name="Jedrychowski M.P."/>
            <person name="Elias J.E."/>
            <person name="Goswami T."/>
            <person name="Rad R."/>
            <person name="Beausoleil S.A."/>
            <person name="Villen J."/>
            <person name="Haas W."/>
            <person name="Sowa M.E."/>
            <person name="Gygi S.P."/>
        </authorList>
    </citation>
    <scope>IDENTIFICATION BY MASS SPECTROMETRY [LARGE SCALE ANALYSIS]</scope>
    <source>
        <tissue>Brain</tissue>
    </source>
</reference>
<proteinExistence type="evidence at protein level"/>
<organism>
    <name type="scientific">Mus musculus</name>
    <name type="common">Mouse</name>
    <dbReference type="NCBI Taxonomy" id="10090"/>
    <lineage>
        <taxon>Eukaryota</taxon>
        <taxon>Metazoa</taxon>
        <taxon>Chordata</taxon>
        <taxon>Craniata</taxon>
        <taxon>Vertebrata</taxon>
        <taxon>Euteleostomi</taxon>
        <taxon>Mammalia</taxon>
        <taxon>Eutheria</taxon>
        <taxon>Euarchontoglires</taxon>
        <taxon>Glires</taxon>
        <taxon>Rodentia</taxon>
        <taxon>Myomorpha</taxon>
        <taxon>Muroidea</taxon>
        <taxon>Muridae</taxon>
        <taxon>Murinae</taxon>
        <taxon>Mus</taxon>
        <taxon>Mus</taxon>
    </lineage>
</organism>